<organism>
    <name type="scientific">Drosophila melanogaster</name>
    <name type="common">Fruit fly</name>
    <dbReference type="NCBI Taxonomy" id="7227"/>
    <lineage>
        <taxon>Eukaryota</taxon>
        <taxon>Metazoa</taxon>
        <taxon>Ecdysozoa</taxon>
        <taxon>Arthropoda</taxon>
        <taxon>Hexapoda</taxon>
        <taxon>Insecta</taxon>
        <taxon>Pterygota</taxon>
        <taxon>Neoptera</taxon>
        <taxon>Endopterygota</taxon>
        <taxon>Diptera</taxon>
        <taxon>Brachycera</taxon>
        <taxon>Muscomorpha</taxon>
        <taxon>Ephydroidea</taxon>
        <taxon>Drosophilidae</taxon>
        <taxon>Drosophila</taxon>
        <taxon>Sophophora</taxon>
    </lineage>
</organism>
<comment type="function">
    <text evidence="3">Unlikely to play an active role in the humoral immune defense. May have a function in the digestion of bacteria in the food.</text>
</comment>
<comment type="catalytic activity">
    <reaction>
        <text>Hydrolysis of (1-&gt;4)-beta-linkages between N-acetylmuramic acid and N-acetyl-D-glucosamine residues in a peptidoglycan and between N-acetyl-D-glucosamine residues in chitodextrins.</text>
        <dbReference type="EC" id="3.2.1.17"/>
    </reaction>
</comment>
<comment type="tissue specificity">
    <text evidence="3">Found in the midgut.</text>
</comment>
<comment type="developmental stage">
    <text evidence="3">Maximal expression is found during the third larval instar, it drops to become undetectable in the late pupal stage. The expression in adults is similar to that of first and second larval instars.</text>
</comment>
<comment type="similarity">
    <text evidence="2">Belongs to the glycosyl hydrolase 22 family.</text>
</comment>
<comment type="sequence caution" evidence="4">
    <conflict type="erroneous initiation">
        <sequence resource="EMBL-CDS" id="ACX30015"/>
    </conflict>
</comment>
<accession>P83972</accession>
<accession>C9QNX1</accession>
<accession>P29614</accession>
<accession>P37157</accession>
<accession>Q9W0J6</accession>
<accession>Q9W0J7</accession>
<sequence>MKAFIVLVALACAAPAFGRTMDRCSLAREMSNLGVPRDQLARWACIAEHESSYRTGVVGPENYNGSNDYGIFQINDYYWCAPPSGRFSYNECGLSCNALLTDDITHSVRCAQKVLSQQGWSAWSTWHYCSGWLPSIDDCF</sequence>
<name>LYSD_DROME</name>
<gene>
    <name type="primary">LysD</name>
    <name type="ORF">CG9118</name>
</gene>
<evidence type="ECO:0000250" key="1"/>
<evidence type="ECO:0000255" key="2">
    <source>
        <dbReference type="PROSITE-ProRule" id="PRU00680"/>
    </source>
</evidence>
<evidence type="ECO:0000269" key="3">
    <source>
    </source>
</evidence>
<evidence type="ECO:0000305" key="4"/>
<proteinExistence type="evidence at transcript level"/>
<keyword id="KW-0929">Antimicrobial</keyword>
<keyword id="KW-0081">Bacteriolytic enzyme</keyword>
<keyword id="KW-1015">Disulfide bond</keyword>
<keyword id="KW-0326">Glycosidase</keyword>
<keyword id="KW-0378">Hydrolase</keyword>
<keyword id="KW-1185">Reference proteome</keyword>
<keyword id="KW-0732">Signal</keyword>
<protein>
    <recommendedName>
        <fullName>Lysozyme D</fullName>
        <ecNumber>3.2.1.17</ecNumber>
    </recommendedName>
    <alternativeName>
        <fullName>1,4-beta-N-acetylmuramidase D</fullName>
    </alternativeName>
</protein>
<reference key="1">
    <citation type="journal article" date="1992" name="Mol. Gen. Genet.">
        <title>The lysozyme locus in Drosophila melanogaster: different genes are expressed in midgut and salivary glands.</title>
        <authorList>
            <person name="Kylsten P."/>
            <person name="Kimbrell D.A."/>
            <person name="Daffre S."/>
            <person name="Samakovlis C."/>
            <person name="Hultmark D."/>
        </authorList>
    </citation>
    <scope>NUCLEOTIDE SEQUENCE [GENOMIC DNA]</scope>
    <scope>FUNCTION</scope>
    <scope>TISSUE SPECIFICITY</scope>
    <scope>DEVELOPMENTAL STAGE</scope>
    <source>
        <strain>Canton-S</strain>
    </source>
</reference>
<reference key="2">
    <citation type="journal article" date="2000" name="Science">
        <title>The genome sequence of Drosophila melanogaster.</title>
        <authorList>
            <person name="Adams M.D."/>
            <person name="Celniker S.E."/>
            <person name="Holt R.A."/>
            <person name="Evans C.A."/>
            <person name="Gocayne J.D."/>
            <person name="Amanatides P.G."/>
            <person name="Scherer S.E."/>
            <person name="Li P.W."/>
            <person name="Hoskins R.A."/>
            <person name="Galle R.F."/>
            <person name="George R.A."/>
            <person name="Lewis S.E."/>
            <person name="Richards S."/>
            <person name="Ashburner M."/>
            <person name="Henderson S.N."/>
            <person name="Sutton G.G."/>
            <person name="Wortman J.R."/>
            <person name="Yandell M.D."/>
            <person name="Zhang Q."/>
            <person name="Chen L.X."/>
            <person name="Brandon R.C."/>
            <person name="Rogers Y.-H.C."/>
            <person name="Blazej R.G."/>
            <person name="Champe M."/>
            <person name="Pfeiffer B.D."/>
            <person name="Wan K.H."/>
            <person name="Doyle C."/>
            <person name="Baxter E.G."/>
            <person name="Helt G."/>
            <person name="Nelson C.R."/>
            <person name="Miklos G.L.G."/>
            <person name="Abril J.F."/>
            <person name="Agbayani A."/>
            <person name="An H.-J."/>
            <person name="Andrews-Pfannkoch C."/>
            <person name="Baldwin D."/>
            <person name="Ballew R.M."/>
            <person name="Basu A."/>
            <person name="Baxendale J."/>
            <person name="Bayraktaroglu L."/>
            <person name="Beasley E.M."/>
            <person name="Beeson K.Y."/>
            <person name="Benos P.V."/>
            <person name="Berman B.P."/>
            <person name="Bhandari D."/>
            <person name="Bolshakov S."/>
            <person name="Borkova D."/>
            <person name="Botchan M.R."/>
            <person name="Bouck J."/>
            <person name="Brokstein P."/>
            <person name="Brottier P."/>
            <person name="Burtis K.C."/>
            <person name="Busam D.A."/>
            <person name="Butler H."/>
            <person name="Cadieu E."/>
            <person name="Center A."/>
            <person name="Chandra I."/>
            <person name="Cherry J.M."/>
            <person name="Cawley S."/>
            <person name="Dahlke C."/>
            <person name="Davenport L.B."/>
            <person name="Davies P."/>
            <person name="de Pablos B."/>
            <person name="Delcher A."/>
            <person name="Deng Z."/>
            <person name="Mays A.D."/>
            <person name="Dew I."/>
            <person name="Dietz S.M."/>
            <person name="Dodson K."/>
            <person name="Doup L.E."/>
            <person name="Downes M."/>
            <person name="Dugan-Rocha S."/>
            <person name="Dunkov B.C."/>
            <person name="Dunn P."/>
            <person name="Durbin K.J."/>
            <person name="Evangelista C.C."/>
            <person name="Ferraz C."/>
            <person name="Ferriera S."/>
            <person name="Fleischmann W."/>
            <person name="Fosler C."/>
            <person name="Gabrielian A.E."/>
            <person name="Garg N.S."/>
            <person name="Gelbart W.M."/>
            <person name="Glasser K."/>
            <person name="Glodek A."/>
            <person name="Gong F."/>
            <person name="Gorrell J.H."/>
            <person name="Gu Z."/>
            <person name="Guan P."/>
            <person name="Harris M."/>
            <person name="Harris N.L."/>
            <person name="Harvey D.A."/>
            <person name="Heiman T.J."/>
            <person name="Hernandez J.R."/>
            <person name="Houck J."/>
            <person name="Hostin D."/>
            <person name="Houston K.A."/>
            <person name="Howland T.J."/>
            <person name="Wei M.-H."/>
            <person name="Ibegwam C."/>
            <person name="Jalali M."/>
            <person name="Kalush F."/>
            <person name="Karpen G.H."/>
            <person name="Ke Z."/>
            <person name="Kennison J.A."/>
            <person name="Ketchum K.A."/>
            <person name="Kimmel B.E."/>
            <person name="Kodira C.D."/>
            <person name="Kraft C.L."/>
            <person name="Kravitz S."/>
            <person name="Kulp D."/>
            <person name="Lai Z."/>
            <person name="Lasko P."/>
            <person name="Lei Y."/>
            <person name="Levitsky A.A."/>
            <person name="Li J.H."/>
            <person name="Li Z."/>
            <person name="Liang Y."/>
            <person name="Lin X."/>
            <person name="Liu X."/>
            <person name="Mattei B."/>
            <person name="McIntosh T.C."/>
            <person name="McLeod M.P."/>
            <person name="McPherson D."/>
            <person name="Merkulov G."/>
            <person name="Milshina N.V."/>
            <person name="Mobarry C."/>
            <person name="Morris J."/>
            <person name="Moshrefi A."/>
            <person name="Mount S.M."/>
            <person name="Moy M."/>
            <person name="Murphy B."/>
            <person name="Murphy L."/>
            <person name="Muzny D.M."/>
            <person name="Nelson D.L."/>
            <person name="Nelson D.R."/>
            <person name="Nelson K.A."/>
            <person name="Nixon K."/>
            <person name="Nusskern D.R."/>
            <person name="Pacleb J.M."/>
            <person name="Palazzolo M."/>
            <person name="Pittman G.S."/>
            <person name="Pan S."/>
            <person name="Pollard J."/>
            <person name="Puri V."/>
            <person name="Reese M.G."/>
            <person name="Reinert K."/>
            <person name="Remington K."/>
            <person name="Saunders R.D.C."/>
            <person name="Scheeler F."/>
            <person name="Shen H."/>
            <person name="Shue B.C."/>
            <person name="Siden-Kiamos I."/>
            <person name="Simpson M."/>
            <person name="Skupski M.P."/>
            <person name="Smith T.J."/>
            <person name="Spier E."/>
            <person name="Spradling A.C."/>
            <person name="Stapleton M."/>
            <person name="Strong R."/>
            <person name="Sun E."/>
            <person name="Svirskas R."/>
            <person name="Tector C."/>
            <person name="Turner R."/>
            <person name="Venter E."/>
            <person name="Wang A.H."/>
            <person name="Wang X."/>
            <person name="Wang Z.-Y."/>
            <person name="Wassarman D.A."/>
            <person name="Weinstock G.M."/>
            <person name="Weissenbach J."/>
            <person name="Williams S.M."/>
            <person name="Woodage T."/>
            <person name="Worley K.C."/>
            <person name="Wu D."/>
            <person name="Yang S."/>
            <person name="Yao Q.A."/>
            <person name="Ye J."/>
            <person name="Yeh R.-F."/>
            <person name="Zaveri J.S."/>
            <person name="Zhan M."/>
            <person name="Zhang G."/>
            <person name="Zhao Q."/>
            <person name="Zheng L."/>
            <person name="Zheng X.H."/>
            <person name="Zhong F.N."/>
            <person name="Zhong W."/>
            <person name="Zhou X."/>
            <person name="Zhu S.C."/>
            <person name="Zhu X."/>
            <person name="Smith H.O."/>
            <person name="Gibbs R.A."/>
            <person name="Myers E.W."/>
            <person name="Rubin G.M."/>
            <person name="Venter J.C."/>
        </authorList>
    </citation>
    <scope>NUCLEOTIDE SEQUENCE [LARGE SCALE GENOMIC DNA]</scope>
    <source>
        <strain>Berkeley</strain>
    </source>
</reference>
<reference key="3">
    <citation type="journal article" date="2002" name="Genome Biol.">
        <title>Annotation of the Drosophila melanogaster euchromatic genome: a systematic review.</title>
        <authorList>
            <person name="Misra S."/>
            <person name="Crosby M.A."/>
            <person name="Mungall C.J."/>
            <person name="Matthews B.B."/>
            <person name="Campbell K.S."/>
            <person name="Hradecky P."/>
            <person name="Huang Y."/>
            <person name="Kaminker J.S."/>
            <person name="Millburn G.H."/>
            <person name="Prochnik S.E."/>
            <person name="Smith C.D."/>
            <person name="Tupy J.L."/>
            <person name="Whitfield E.J."/>
            <person name="Bayraktaroglu L."/>
            <person name="Berman B.P."/>
            <person name="Bettencourt B.R."/>
            <person name="Celniker S.E."/>
            <person name="de Grey A.D.N.J."/>
            <person name="Drysdale R.A."/>
            <person name="Harris N.L."/>
            <person name="Richter J."/>
            <person name="Russo S."/>
            <person name="Schroeder A.J."/>
            <person name="Shu S.Q."/>
            <person name="Stapleton M."/>
            <person name="Yamada C."/>
            <person name="Ashburner M."/>
            <person name="Gelbart W.M."/>
            <person name="Rubin G.M."/>
            <person name="Lewis S.E."/>
        </authorList>
    </citation>
    <scope>GENOME REANNOTATION</scope>
    <source>
        <strain>Berkeley</strain>
    </source>
</reference>
<reference key="4">
    <citation type="submission" date="2009-09" db="EMBL/GenBank/DDBJ databases">
        <authorList>
            <person name="Carlson J.W."/>
            <person name="Booth B."/>
            <person name="Frise E."/>
            <person name="Sandler J."/>
            <person name="Wan K.H."/>
            <person name="Yu C."/>
            <person name="Celniker S.E."/>
        </authorList>
    </citation>
    <scope>NUCLEOTIDE SEQUENCE [LARGE SCALE MRNA]</scope>
    <source>
        <strain>Berkeley</strain>
    </source>
</reference>
<dbReference type="EC" id="3.2.1.17"/>
<dbReference type="EMBL" id="X58382">
    <property type="protein sequence ID" value="CAA41272.1"/>
    <property type="molecule type" value="Genomic_DNA"/>
</dbReference>
<dbReference type="EMBL" id="AE014296">
    <property type="protein sequence ID" value="AAF47450.1"/>
    <property type="molecule type" value="Genomic_DNA"/>
</dbReference>
<dbReference type="EMBL" id="BT099853">
    <property type="protein sequence ID" value="ACX30015.1"/>
    <property type="status" value="ALT_INIT"/>
    <property type="molecule type" value="mRNA"/>
</dbReference>
<dbReference type="PIR" id="S20914">
    <property type="entry name" value="S20914"/>
</dbReference>
<dbReference type="RefSeq" id="NP_476823.1">
    <property type="nucleotide sequence ID" value="NM_057475.3"/>
</dbReference>
<dbReference type="SMR" id="P83972"/>
<dbReference type="BioGRID" id="63673">
    <property type="interactions" value="3"/>
</dbReference>
<dbReference type="FunCoup" id="P83972">
    <property type="interactions" value="30"/>
</dbReference>
<dbReference type="STRING" id="7227.FBpp0072530"/>
<dbReference type="CAZy" id="GH22">
    <property type="family name" value="Glycoside Hydrolase Family 22"/>
</dbReference>
<dbReference type="PaxDb" id="7227-FBpp0072525"/>
<dbReference type="DNASU" id="38127"/>
<dbReference type="EnsemblMetazoa" id="FBtr0072634">
    <property type="protein sequence ID" value="FBpp0072530"/>
    <property type="gene ID" value="FBgn0004427"/>
</dbReference>
<dbReference type="GeneID" id="38127"/>
<dbReference type="KEGG" id="dme:Dmel_CG9118"/>
<dbReference type="AGR" id="FB:FBgn0004427"/>
<dbReference type="CTD" id="38127"/>
<dbReference type="FlyBase" id="FBgn0004427">
    <property type="gene designation" value="LysD"/>
</dbReference>
<dbReference type="VEuPathDB" id="VectorBase:FBgn0004427"/>
<dbReference type="eggNOG" id="ENOG502S1S1">
    <property type="taxonomic scope" value="Eukaryota"/>
</dbReference>
<dbReference type="GeneTree" id="ENSGT00940000166760"/>
<dbReference type="HOGENOM" id="CLU_111620_2_1_1"/>
<dbReference type="InParanoid" id="P83972"/>
<dbReference type="OMA" id="LENWVCM"/>
<dbReference type="OrthoDB" id="17373at2759"/>
<dbReference type="PhylomeDB" id="P83972"/>
<dbReference type="Reactome" id="R-DME-5653890">
    <property type="pathway name" value="Lactose synthesis"/>
</dbReference>
<dbReference type="BioGRID-ORCS" id="38127">
    <property type="hits" value="0 hits in 3 CRISPR screens"/>
</dbReference>
<dbReference type="GenomeRNAi" id="38127"/>
<dbReference type="PRO" id="PR:P83972"/>
<dbReference type="Proteomes" id="UP000000803">
    <property type="component" value="Chromosome 3L"/>
</dbReference>
<dbReference type="Bgee" id="FBgn0004427">
    <property type="expression patterns" value="Expressed in adult enterocyte in adult thorax and 25 other cell types or tissues"/>
</dbReference>
<dbReference type="ExpressionAtlas" id="P83972">
    <property type="expression patterns" value="baseline and differential"/>
</dbReference>
<dbReference type="GO" id="GO:0005615">
    <property type="term" value="C:extracellular space"/>
    <property type="evidence" value="ECO:0000250"/>
    <property type="project" value="FlyBase"/>
</dbReference>
<dbReference type="GO" id="GO:0004568">
    <property type="term" value="F:chitinase activity"/>
    <property type="evidence" value="ECO:0000314"/>
    <property type="project" value="FlyBase"/>
</dbReference>
<dbReference type="GO" id="GO:0003796">
    <property type="term" value="F:lysozyme activity"/>
    <property type="evidence" value="ECO:0000314"/>
    <property type="project" value="FlyBase"/>
</dbReference>
<dbReference type="GO" id="GO:0050829">
    <property type="term" value="P:defense response to Gram-negative bacterium"/>
    <property type="evidence" value="ECO:0000250"/>
    <property type="project" value="FlyBase"/>
</dbReference>
<dbReference type="GO" id="GO:0031640">
    <property type="term" value="P:killing of cells of another organism"/>
    <property type="evidence" value="ECO:0007669"/>
    <property type="project" value="UniProtKB-KW"/>
</dbReference>
<dbReference type="CDD" id="cd16899">
    <property type="entry name" value="LYZ_C_invert"/>
    <property type="match status" value="1"/>
</dbReference>
<dbReference type="FunFam" id="1.10.530.10:FF:000001">
    <property type="entry name" value="Lysozyme C"/>
    <property type="match status" value="1"/>
</dbReference>
<dbReference type="Gene3D" id="1.10.530.10">
    <property type="match status" value="1"/>
</dbReference>
<dbReference type="InterPro" id="IPR001916">
    <property type="entry name" value="Glyco_hydro_22"/>
</dbReference>
<dbReference type="InterPro" id="IPR019799">
    <property type="entry name" value="Glyco_hydro_22_CS"/>
</dbReference>
<dbReference type="InterPro" id="IPR000974">
    <property type="entry name" value="Glyco_hydro_22_lys"/>
</dbReference>
<dbReference type="InterPro" id="IPR023346">
    <property type="entry name" value="Lysozyme-like_dom_sf"/>
</dbReference>
<dbReference type="PANTHER" id="PTHR11407:SF36">
    <property type="entry name" value="GEO02684P1-RELATED"/>
    <property type="match status" value="1"/>
</dbReference>
<dbReference type="PANTHER" id="PTHR11407">
    <property type="entry name" value="LYSOZYME C"/>
    <property type="match status" value="1"/>
</dbReference>
<dbReference type="Pfam" id="PF00062">
    <property type="entry name" value="Lys"/>
    <property type="match status" value="1"/>
</dbReference>
<dbReference type="PRINTS" id="PR00137">
    <property type="entry name" value="LYSOZYME"/>
</dbReference>
<dbReference type="PRINTS" id="PR00135">
    <property type="entry name" value="LYZLACT"/>
</dbReference>
<dbReference type="SMART" id="SM00263">
    <property type="entry name" value="LYZ1"/>
    <property type="match status" value="1"/>
</dbReference>
<dbReference type="SUPFAM" id="SSF53955">
    <property type="entry name" value="Lysozyme-like"/>
    <property type="match status" value="1"/>
</dbReference>
<dbReference type="PROSITE" id="PS00128">
    <property type="entry name" value="GLYCOSYL_HYDROL_F22_1"/>
    <property type="match status" value="1"/>
</dbReference>
<dbReference type="PROSITE" id="PS51348">
    <property type="entry name" value="GLYCOSYL_HYDROL_F22_2"/>
    <property type="match status" value="1"/>
</dbReference>
<feature type="signal peptide" evidence="1">
    <location>
        <begin position="1"/>
        <end position="18"/>
    </location>
</feature>
<feature type="chain" id="PRO_0000018512" description="Lysozyme D">
    <location>
        <begin position="19"/>
        <end position="140"/>
    </location>
</feature>
<feature type="domain" description="C-type lysozyme" evidence="2">
    <location>
        <begin position="19"/>
        <end position="140"/>
    </location>
</feature>
<feature type="active site" evidence="2">
    <location>
        <position position="50"/>
    </location>
</feature>
<feature type="active site" evidence="2">
    <location>
        <position position="68"/>
    </location>
</feature>
<feature type="disulfide bond" evidence="2">
    <location>
        <begin position="24"/>
        <end position="139"/>
    </location>
</feature>
<feature type="disulfide bond" evidence="2">
    <location>
        <begin position="45"/>
        <end position="129"/>
    </location>
</feature>
<feature type="disulfide bond" evidence="2">
    <location>
        <begin position="80"/>
        <end position="96"/>
    </location>
</feature>
<feature type="disulfide bond" evidence="2">
    <location>
        <begin position="92"/>
        <end position="110"/>
    </location>
</feature>